<feature type="initiator methionine" description="Removed" evidence="2">
    <location>
        <position position="1"/>
    </location>
</feature>
<feature type="chain" id="PRO_0000106180" description="Nucleotide-binding protein YajQ">
    <location>
        <begin position="2"/>
        <end position="163"/>
    </location>
</feature>
<comment type="function">
    <text evidence="2">Nucleotide-binding protein (PubMed:12381839). Binds ATP, GTP and tRNA (PubMed:12381839).</text>
</comment>
<comment type="subunit">
    <text evidence="2">Monomer.</text>
</comment>
<comment type="interaction">
    <interactant intactId="EBI-370752">
        <id>P0A8E7</id>
    </interactant>
    <interactant intactId="EBI-542385">
        <id>P0A988</id>
        <label>dnaN</label>
    </interactant>
    <organismsDiffer>false</organismsDiffer>
    <experiments>2</experiments>
</comment>
<comment type="interaction">
    <interactant intactId="EBI-370752">
        <id>P0A8E7</id>
    </interactant>
    <interactant intactId="EBI-554985">
        <id>P0A9I5</id>
        <label>napD</label>
    </interactant>
    <organismsDiffer>false</organismsDiffer>
    <experiments>4</experiments>
</comment>
<comment type="domain">
    <text evidence="2">Composed of two domains, each centered on a beta-sheet, connected by two helical segments.</text>
</comment>
<comment type="mass spectrometry" mass="18212.0" method="Electrospray" evidence="2"/>
<comment type="similarity">
    <text evidence="1 3">Belongs to the YajQ family.</text>
</comment>
<comment type="sequence caution" evidence="3">
    <conflict type="erroneous initiation">
        <sequence resource="EMBL-CDS" id="AAB40182"/>
    </conflict>
    <text>Extended N-terminus.</text>
</comment>
<organism>
    <name type="scientific">Escherichia coli (strain K12)</name>
    <dbReference type="NCBI Taxonomy" id="83333"/>
    <lineage>
        <taxon>Bacteria</taxon>
        <taxon>Pseudomonadati</taxon>
        <taxon>Pseudomonadota</taxon>
        <taxon>Gammaproteobacteria</taxon>
        <taxon>Enterobacterales</taxon>
        <taxon>Enterobacteriaceae</taxon>
        <taxon>Escherichia</taxon>
    </lineage>
</organism>
<evidence type="ECO:0000255" key="1">
    <source>
        <dbReference type="HAMAP-Rule" id="MF_00632"/>
    </source>
</evidence>
<evidence type="ECO:0000269" key="2">
    <source>
    </source>
</evidence>
<evidence type="ECO:0000305" key="3"/>
<protein>
    <recommendedName>
        <fullName evidence="3">Nucleotide-binding protein YajQ</fullName>
    </recommendedName>
</protein>
<proteinExistence type="evidence at protein level"/>
<sequence length="163" mass="18344">MPSFDIVSEVDLQEARNAVDNASREVESRFDFRNVEASFELNDASKTIKVLSESDFQVNQLLDILRAKLLKRGIEGSSLDVPENIVHSGKTWFVEAKLKQGIESATQKKIVKMIKDSKLKVQAQIQGDEIRVTGKSRDDLQAVMAMVRGGDLGQPFQFKNFRD</sequence>
<gene>
    <name type="primary">yajQ</name>
    <name type="ordered locus">b0426</name>
    <name type="ordered locus">JW5058</name>
</gene>
<keyword id="KW-0067">ATP-binding</keyword>
<keyword id="KW-0342">GTP-binding</keyword>
<keyword id="KW-0547">Nucleotide-binding</keyword>
<keyword id="KW-1185">Reference proteome</keyword>
<accession>P0A8E7</accession>
<accession>P77482</accession>
<accession>Q2MC00</accession>
<dbReference type="EMBL" id="U82664">
    <property type="protein sequence ID" value="AAB40182.1"/>
    <property type="status" value="ALT_INIT"/>
    <property type="molecule type" value="Genomic_DNA"/>
</dbReference>
<dbReference type="EMBL" id="U00096">
    <property type="protein sequence ID" value="AAC73529.2"/>
    <property type="molecule type" value="Genomic_DNA"/>
</dbReference>
<dbReference type="EMBL" id="AP009048">
    <property type="protein sequence ID" value="BAE76206.1"/>
    <property type="molecule type" value="Genomic_DNA"/>
</dbReference>
<dbReference type="PIR" id="B64772">
    <property type="entry name" value="B64772"/>
</dbReference>
<dbReference type="RefSeq" id="NP_414960.2">
    <property type="nucleotide sequence ID" value="NC_000913.3"/>
</dbReference>
<dbReference type="RefSeq" id="WP_001138904.1">
    <property type="nucleotide sequence ID" value="NZ_STEB01000007.1"/>
</dbReference>
<dbReference type="SMR" id="P0A8E7"/>
<dbReference type="BioGRID" id="4259513">
    <property type="interactions" value="28"/>
</dbReference>
<dbReference type="DIP" id="DIP-31840N"/>
<dbReference type="FunCoup" id="P0A8E7">
    <property type="interactions" value="498"/>
</dbReference>
<dbReference type="IntAct" id="P0A8E7">
    <property type="interactions" value="6"/>
</dbReference>
<dbReference type="STRING" id="511145.b0426"/>
<dbReference type="jPOST" id="P0A8E7"/>
<dbReference type="PaxDb" id="511145-b0426"/>
<dbReference type="EnsemblBacteria" id="AAC73529">
    <property type="protein sequence ID" value="AAC73529"/>
    <property type="gene ID" value="b0426"/>
</dbReference>
<dbReference type="GeneID" id="93777034"/>
<dbReference type="GeneID" id="945063"/>
<dbReference type="KEGG" id="ecj:JW5058"/>
<dbReference type="KEGG" id="eco:b0426"/>
<dbReference type="KEGG" id="ecoc:C3026_02080"/>
<dbReference type="PATRIC" id="fig|1411691.4.peg.1851"/>
<dbReference type="EchoBASE" id="EB3379"/>
<dbReference type="eggNOG" id="COG1666">
    <property type="taxonomic scope" value="Bacteria"/>
</dbReference>
<dbReference type="HOGENOM" id="CLU_099839_1_0_6"/>
<dbReference type="InParanoid" id="P0A8E7"/>
<dbReference type="OMA" id="DFKGVGA"/>
<dbReference type="OrthoDB" id="9801447at2"/>
<dbReference type="PhylomeDB" id="P0A8E7"/>
<dbReference type="BioCyc" id="EcoCyc:G6240-MONOMER"/>
<dbReference type="PRO" id="PR:P0A8E7"/>
<dbReference type="Proteomes" id="UP000000625">
    <property type="component" value="Chromosome"/>
</dbReference>
<dbReference type="GO" id="GO:0005829">
    <property type="term" value="C:cytosol"/>
    <property type="evidence" value="ECO:0000314"/>
    <property type="project" value="EcoCyc"/>
</dbReference>
<dbReference type="GO" id="GO:0005524">
    <property type="term" value="F:ATP binding"/>
    <property type="evidence" value="ECO:0000314"/>
    <property type="project" value="EcoliWiki"/>
</dbReference>
<dbReference type="GO" id="GO:0005525">
    <property type="term" value="F:GTP binding"/>
    <property type="evidence" value="ECO:0000314"/>
    <property type="project" value="EcoCyc"/>
</dbReference>
<dbReference type="GO" id="GO:0000166">
    <property type="term" value="F:nucleotide binding"/>
    <property type="evidence" value="ECO:0000318"/>
    <property type="project" value="GO_Central"/>
</dbReference>
<dbReference type="GO" id="GO:0000049">
    <property type="term" value="F:tRNA binding"/>
    <property type="evidence" value="ECO:0000314"/>
    <property type="project" value="EcoliWiki"/>
</dbReference>
<dbReference type="GO" id="GO:0006974">
    <property type="term" value="P:DNA damage response"/>
    <property type="evidence" value="ECO:0000315"/>
    <property type="project" value="EcoCyc"/>
</dbReference>
<dbReference type="GO" id="GO:0042542">
    <property type="term" value="P:response to hydrogen peroxide"/>
    <property type="evidence" value="ECO:0000315"/>
    <property type="project" value="EcoCyc"/>
</dbReference>
<dbReference type="CDD" id="cd11740">
    <property type="entry name" value="YajQ_like"/>
    <property type="match status" value="1"/>
</dbReference>
<dbReference type="FunFam" id="3.30.70.860:FF:000001">
    <property type="entry name" value="UPF0234 protein YajQ"/>
    <property type="match status" value="1"/>
</dbReference>
<dbReference type="FunFam" id="3.30.70.990:FF:000001">
    <property type="entry name" value="UPF0234 protein YajQ"/>
    <property type="match status" value="1"/>
</dbReference>
<dbReference type="Gene3D" id="3.30.70.860">
    <property type="match status" value="1"/>
</dbReference>
<dbReference type="Gene3D" id="3.30.70.990">
    <property type="entry name" value="YajQ-like, domain 2"/>
    <property type="match status" value="1"/>
</dbReference>
<dbReference type="HAMAP" id="MF_00632">
    <property type="entry name" value="YajQ"/>
    <property type="match status" value="1"/>
</dbReference>
<dbReference type="InterPro" id="IPR007551">
    <property type="entry name" value="DUF520"/>
</dbReference>
<dbReference type="InterPro" id="IPR035571">
    <property type="entry name" value="UPF0234-like_C"/>
</dbReference>
<dbReference type="InterPro" id="IPR035570">
    <property type="entry name" value="UPF0234_N"/>
</dbReference>
<dbReference type="InterPro" id="IPR036183">
    <property type="entry name" value="YajQ-like_sf"/>
</dbReference>
<dbReference type="NCBIfam" id="NF003819">
    <property type="entry name" value="PRK05412.1"/>
    <property type="match status" value="1"/>
</dbReference>
<dbReference type="PANTHER" id="PTHR30476">
    <property type="entry name" value="UPF0234 PROTEIN YAJQ"/>
    <property type="match status" value="1"/>
</dbReference>
<dbReference type="PANTHER" id="PTHR30476:SF0">
    <property type="entry name" value="UPF0234 PROTEIN YAJQ"/>
    <property type="match status" value="1"/>
</dbReference>
<dbReference type="Pfam" id="PF04461">
    <property type="entry name" value="DUF520"/>
    <property type="match status" value="1"/>
</dbReference>
<dbReference type="SUPFAM" id="SSF89963">
    <property type="entry name" value="YajQ-like"/>
    <property type="match status" value="2"/>
</dbReference>
<name>YAJQ_ECOLI</name>
<reference key="1">
    <citation type="submission" date="1997-01" db="EMBL/GenBank/DDBJ databases">
        <title>Sequence of minutes 4-25 of Escherichia coli.</title>
        <authorList>
            <person name="Chung E."/>
            <person name="Allen E."/>
            <person name="Araujo R."/>
            <person name="Aparicio A.M."/>
            <person name="Davis K."/>
            <person name="Duncan M."/>
            <person name="Federspiel N."/>
            <person name="Hyman R."/>
            <person name="Kalman S."/>
            <person name="Komp C."/>
            <person name="Kurdi O."/>
            <person name="Lew H."/>
            <person name="Lin D."/>
            <person name="Namath A."/>
            <person name="Oefner P."/>
            <person name="Roberts D."/>
            <person name="Schramm S."/>
            <person name="Davis R.W."/>
        </authorList>
    </citation>
    <scope>NUCLEOTIDE SEQUENCE [LARGE SCALE GENOMIC DNA]</scope>
    <source>
        <strain>K12 / MG1655 / ATCC 47076</strain>
    </source>
</reference>
<reference key="2">
    <citation type="journal article" date="1997" name="Science">
        <title>The complete genome sequence of Escherichia coli K-12.</title>
        <authorList>
            <person name="Blattner F.R."/>
            <person name="Plunkett G. III"/>
            <person name="Bloch C.A."/>
            <person name="Perna N.T."/>
            <person name="Burland V."/>
            <person name="Riley M."/>
            <person name="Collado-Vides J."/>
            <person name="Glasner J.D."/>
            <person name="Rode C.K."/>
            <person name="Mayhew G.F."/>
            <person name="Gregor J."/>
            <person name="Davis N.W."/>
            <person name="Kirkpatrick H.A."/>
            <person name="Goeden M.A."/>
            <person name="Rose D.J."/>
            <person name="Mau B."/>
            <person name="Shao Y."/>
        </authorList>
    </citation>
    <scope>NUCLEOTIDE SEQUENCE [LARGE SCALE GENOMIC DNA]</scope>
    <source>
        <strain>K12 / MG1655 / ATCC 47076</strain>
    </source>
</reference>
<reference key="3">
    <citation type="journal article" date="2006" name="Mol. Syst. Biol.">
        <title>Highly accurate genome sequences of Escherichia coli K-12 strains MG1655 and W3110.</title>
        <authorList>
            <person name="Hayashi K."/>
            <person name="Morooka N."/>
            <person name="Yamamoto Y."/>
            <person name="Fujita K."/>
            <person name="Isono K."/>
            <person name="Choi S."/>
            <person name="Ohtsubo E."/>
            <person name="Baba T."/>
            <person name="Wanner B.L."/>
            <person name="Mori H."/>
            <person name="Horiuchi T."/>
        </authorList>
    </citation>
    <scope>NUCLEOTIDE SEQUENCE [LARGE SCALE GENOMIC DNA]</scope>
    <source>
        <strain>K12 / W3110 / ATCC 27325 / DSM 5911</strain>
    </source>
</reference>
<reference key="4">
    <citation type="journal article" date="1999" name="Electrophoresis">
        <title>Enrichment of low abundance proteins of Escherichia coli by hydroxyapatite chromatography.</title>
        <authorList>
            <person name="Fountoulakis M."/>
            <person name="Takacs M.-F."/>
            <person name="Berndt P."/>
            <person name="Langen H."/>
            <person name="Takacs B."/>
        </authorList>
    </citation>
    <scope>IDENTIFICATION BY MASS SPECTROMETRY</scope>
    <source>
        <strain>B / BL21</strain>
    </source>
</reference>
<reference key="5">
    <citation type="journal article" date="2002" name="Protein Sci.">
        <title>Structural and nucleotide-binding properties of YajQ and YnaF, two Escherichia coli proteins of unknown function.</title>
        <authorList>
            <person name="Saveanu C."/>
            <person name="Miron S."/>
            <person name="Borza T."/>
            <person name="Craescu C.T."/>
            <person name="Labesse G."/>
            <person name="Gagyi C."/>
            <person name="Popescu A."/>
            <person name="Schaeffer F."/>
            <person name="Namane A."/>
            <person name="Laurent-Winter C."/>
            <person name="Barzu O."/>
            <person name="Gilles A.-M."/>
        </authorList>
    </citation>
    <scope>FUNCTION</scope>
    <scope>NUCLEOTIDE BINDING</scope>
    <scope>SUBUNIT</scope>
    <scope>DOMAIN</scope>
    <scope>MASS SPECTROMETRY</scope>
    <source>
        <strain>K12</strain>
    </source>
</reference>